<proteinExistence type="inferred from homology"/>
<protein>
    <recommendedName>
        <fullName evidence="1">Large ribosomal subunit protein bL17</fullName>
    </recommendedName>
    <alternativeName>
        <fullName evidence="2">50S ribosomal protein L17</fullName>
    </alternativeName>
</protein>
<name>RL17_BACC3</name>
<gene>
    <name evidence="1" type="primary">rplQ</name>
    <name type="ordered locus">BCA_0167</name>
</gene>
<dbReference type="EMBL" id="CP001407">
    <property type="protein sequence ID" value="ACO26304.1"/>
    <property type="molecule type" value="Genomic_DNA"/>
</dbReference>
<dbReference type="RefSeq" id="WP_000331490.1">
    <property type="nucleotide sequence ID" value="NZ_CP009318.1"/>
</dbReference>
<dbReference type="SMR" id="C1ET67"/>
<dbReference type="GeneID" id="93010915"/>
<dbReference type="KEGG" id="bcx:BCA_0167"/>
<dbReference type="PATRIC" id="fig|572264.18.peg.202"/>
<dbReference type="Proteomes" id="UP000002210">
    <property type="component" value="Chromosome"/>
</dbReference>
<dbReference type="GO" id="GO:0022625">
    <property type="term" value="C:cytosolic large ribosomal subunit"/>
    <property type="evidence" value="ECO:0007669"/>
    <property type="project" value="TreeGrafter"/>
</dbReference>
<dbReference type="GO" id="GO:0003735">
    <property type="term" value="F:structural constituent of ribosome"/>
    <property type="evidence" value="ECO:0007669"/>
    <property type="project" value="InterPro"/>
</dbReference>
<dbReference type="GO" id="GO:0006412">
    <property type="term" value="P:translation"/>
    <property type="evidence" value="ECO:0007669"/>
    <property type="project" value="UniProtKB-UniRule"/>
</dbReference>
<dbReference type="FunFam" id="3.90.1030.10:FF:000002">
    <property type="entry name" value="50S ribosomal protein L17"/>
    <property type="match status" value="1"/>
</dbReference>
<dbReference type="Gene3D" id="3.90.1030.10">
    <property type="entry name" value="Ribosomal protein L17"/>
    <property type="match status" value="1"/>
</dbReference>
<dbReference type="HAMAP" id="MF_01368">
    <property type="entry name" value="Ribosomal_bL17"/>
    <property type="match status" value="1"/>
</dbReference>
<dbReference type="InterPro" id="IPR000456">
    <property type="entry name" value="Ribosomal_bL17"/>
</dbReference>
<dbReference type="InterPro" id="IPR047859">
    <property type="entry name" value="Ribosomal_bL17_CS"/>
</dbReference>
<dbReference type="InterPro" id="IPR036373">
    <property type="entry name" value="Ribosomal_bL17_sf"/>
</dbReference>
<dbReference type="NCBIfam" id="TIGR00059">
    <property type="entry name" value="L17"/>
    <property type="match status" value="1"/>
</dbReference>
<dbReference type="PANTHER" id="PTHR14413:SF16">
    <property type="entry name" value="LARGE RIBOSOMAL SUBUNIT PROTEIN BL17M"/>
    <property type="match status" value="1"/>
</dbReference>
<dbReference type="PANTHER" id="PTHR14413">
    <property type="entry name" value="RIBOSOMAL PROTEIN L17"/>
    <property type="match status" value="1"/>
</dbReference>
<dbReference type="Pfam" id="PF01196">
    <property type="entry name" value="Ribosomal_L17"/>
    <property type="match status" value="1"/>
</dbReference>
<dbReference type="SUPFAM" id="SSF64263">
    <property type="entry name" value="Prokaryotic ribosomal protein L17"/>
    <property type="match status" value="1"/>
</dbReference>
<dbReference type="PROSITE" id="PS01167">
    <property type="entry name" value="RIBOSOMAL_L17"/>
    <property type="match status" value="1"/>
</dbReference>
<comment type="subunit">
    <text evidence="1">Part of the 50S ribosomal subunit. Contacts protein L32.</text>
</comment>
<comment type="similarity">
    <text evidence="1">Belongs to the bacterial ribosomal protein bL17 family.</text>
</comment>
<feature type="chain" id="PRO_1000183998" description="Large ribosomal subunit protein bL17">
    <location>
        <begin position="1"/>
        <end position="120"/>
    </location>
</feature>
<accession>C1ET67</accession>
<keyword id="KW-0687">Ribonucleoprotein</keyword>
<keyword id="KW-0689">Ribosomal protein</keyword>
<organism>
    <name type="scientific">Bacillus cereus (strain 03BB102)</name>
    <dbReference type="NCBI Taxonomy" id="572264"/>
    <lineage>
        <taxon>Bacteria</taxon>
        <taxon>Bacillati</taxon>
        <taxon>Bacillota</taxon>
        <taxon>Bacilli</taxon>
        <taxon>Bacillales</taxon>
        <taxon>Bacillaceae</taxon>
        <taxon>Bacillus</taxon>
        <taxon>Bacillus cereus group</taxon>
    </lineage>
</organism>
<evidence type="ECO:0000255" key="1">
    <source>
        <dbReference type="HAMAP-Rule" id="MF_01368"/>
    </source>
</evidence>
<evidence type="ECO:0000305" key="2"/>
<reference key="1">
    <citation type="submission" date="2009-02" db="EMBL/GenBank/DDBJ databases">
        <title>Genome sequence of Bacillus cereus 03BB102.</title>
        <authorList>
            <person name="Dodson R.J."/>
            <person name="Jackson P."/>
            <person name="Munk A.C."/>
            <person name="Brettin T."/>
            <person name="Bruce D."/>
            <person name="Detter C."/>
            <person name="Tapia R."/>
            <person name="Han C."/>
            <person name="Sutton G."/>
            <person name="Sims D."/>
        </authorList>
    </citation>
    <scope>NUCLEOTIDE SEQUENCE [LARGE SCALE GENOMIC DNA]</scope>
    <source>
        <strain>03BB102</strain>
    </source>
</reference>
<sequence length="120" mass="13450">MAYRKLGRTSAQRKAMLRDLATDLIINERIQTTETRAKELRSVVEKMITLGKRGDLHARRQAAAFIRNEVANAETGQDALQKLFADVAPRYAERQGGYTRIAKIGPRRGDAAPMVIIELV</sequence>